<reference key="1">
    <citation type="submission" date="2009-01" db="EMBL/GenBank/DDBJ databases">
        <title>Complete sequence of Anaeromyxobacter dehalogenans 2CP-1.</title>
        <authorList>
            <person name="Lucas S."/>
            <person name="Copeland A."/>
            <person name="Lapidus A."/>
            <person name="Glavina del Rio T."/>
            <person name="Dalin E."/>
            <person name="Tice H."/>
            <person name="Bruce D."/>
            <person name="Goodwin L."/>
            <person name="Pitluck S."/>
            <person name="Saunders E."/>
            <person name="Brettin T."/>
            <person name="Detter J.C."/>
            <person name="Han C."/>
            <person name="Larimer F."/>
            <person name="Land M."/>
            <person name="Hauser L."/>
            <person name="Kyrpides N."/>
            <person name="Ovchinnikova G."/>
            <person name="Beliaev A.S."/>
            <person name="Richardson P."/>
        </authorList>
    </citation>
    <scope>NUCLEOTIDE SEQUENCE [LARGE SCALE GENOMIC DNA]</scope>
    <source>
        <strain>2CP-1 / ATCC BAA-258</strain>
    </source>
</reference>
<gene>
    <name evidence="1" type="primary">spoVG</name>
    <name type="ordered locus">A2cp1_0140</name>
</gene>
<proteinExistence type="inferred from homology"/>
<keyword id="KW-0131">Cell cycle</keyword>
<keyword id="KW-0132">Cell division</keyword>
<keyword id="KW-0717">Septation</keyword>
<protein>
    <recommendedName>
        <fullName evidence="1">Putative septation protein SpoVG</fullName>
    </recommendedName>
</protein>
<feature type="chain" id="PRO_1000148678" description="Putative septation protein SpoVG">
    <location>
        <begin position="1"/>
        <end position="101"/>
    </location>
</feature>
<feature type="region of interest" description="Disordered" evidence="2">
    <location>
        <begin position="82"/>
        <end position="101"/>
    </location>
</feature>
<sequence length="101" mass="11450">MEITEVRVFPVNEEKLKAYVTITLDHCFVIRDLKVIHGNTGLFIAMPAKRRKDGTFKDIAHPLNSDTREKMERTILAEYDRELKKGGAAPARATGTDPHED</sequence>
<comment type="function">
    <text evidence="1">Could be involved in septation.</text>
</comment>
<comment type="similarity">
    <text evidence="1">Belongs to the SpoVG family.</text>
</comment>
<accession>B8J807</accession>
<name>SP5G_ANAD2</name>
<dbReference type="EMBL" id="CP001359">
    <property type="protein sequence ID" value="ACL63499.1"/>
    <property type="molecule type" value="Genomic_DNA"/>
</dbReference>
<dbReference type="RefSeq" id="WP_012524208.1">
    <property type="nucleotide sequence ID" value="NC_011891.1"/>
</dbReference>
<dbReference type="SMR" id="B8J807"/>
<dbReference type="KEGG" id="acp:A2cp1_0140"/>
<dbReference type="HOGENOM" id="CLU_103669_2_1_7"/>
<dbReference type="Proteomes" id="UP000007089">
    <property type="component" value="Chromosome"/>
</dbReference>
<dbReference type="GO" id="GO:0000917">
    <property type="term" value="P:division septum assembly"/>
    <property type="evidence" value="ECO:0007669"/>
    <property type="project" value="UniProtKB-KW"/>
</dbReference>
<dbReference type="GO" id="GO:0030435">
    <property type="term" value="P:sporulation resulting in formation of a cellular spore"/>
    <property type="evidence" value="ECO:0007669"/>
    <property type="project" value="InterPro"/>
</dbReference>
<dbReference type="Gene3D" id="3.30.1120.40">
    <property type="entry name" value="Stage V sporulation protein G"/>
    <property type="match status" value="1"/>
</dbReference>
<dbReference type="HAMAP" id="MF_00819">
    <property type="entry name" value="SpoVG"/>
    <property type="match status" value="1"/>
</dbReference>
<dbReference type="InterPro" id="IPR007170">
    <property type="entry name" value="SpoVG"/>
</dbReference>
<dbReference type="InterPro" id="IPR036751">
    <property type="entry name" value="SpoVG_sf"/>
</dbReference>
<dbReference type="NCBIfam" id="NF009749">
    <property type="entry name" value="PRK13259.1"/>
    <property type="match status" value="1"/>
</dbReference>
<dbReference type="PANTHER" id="PTHR38429">
    <property type="entry name" value="SEPTATION PROTEIN SPOVG-RELATED"/>
    <property type="match status" value="1"/>
</dbReference>
<dbReference type="PANTHER" id="PTHR38429:SF1">
    <property type="entry name" value="SEPTATION PROTEIN SPOVG-RELATED"/>
    <property type="match status" value="1"/>
</dbReference>
<dbReference type="Pfam" id="PF04026">
    <property type="entry name" value="SpoVG"/>
    <property type="match status" value="1"/>
</dbReference>
<dbReference type="SUPFAM" id="SSF160537">
    <property type="entry name" value="SpoVG-like"/>
    <property type="match status" value="1"/>
</dbReference>
<evidence type="ECO:0000255" key="1">
    <source>
        <dbReference type="HAMAP-Rule" id="MF_00819"/>
    </source>
</evidence>
<evidence type="ECO:0000256" key="2">
    <source>
        <dbReference type="SAM" id="MobiDB-lite"/>
    </source>
</evidence>
<organism>
    <name type="scientific">Anaeromyxobacter dehalogenans (strain 2CP-1 / ATCC BAA-258)</name>
    <dbReference type="NCBI Taxonomy" id="455488"/>
    <lineage>
        <taxon>Bacteria</taxon>
        <taxon>Pseudomonadati</taxon>
        <taxon>Myxococcota</taxon>
        <taxon>Myxococcia</taxon>
        <taxon>Myxococcales</taxon>
        <taxon>Cystobacterineae</taxon>
        <taxon>Anaeromyxobacteraceae</taxon>
        <taxon>Anaeromyxobacter</taxon>
    </lineage>
</organism>